<evidence type="ECO:0000255" key="1">
    <source>
        <dbReference type="HAMAP-Rule" id="MF_01217"/>
    </source>
</evidence>
<evidence type="ECO:0000255" key="2">
    <source>
        <dbReference type="PROSITE-ProRule" id="PRU00258"/>
    </source>
</evidence>
<gene>
    <name evidence="1" type="primary">acpP</name>
    <name type="synonym">acpA</name>
    <name type="ordered locus">ABC2300</name>
</gene>
<dbReference type="EMBL" id="AP006627">
    <property type="protein sequence ID" value="BAD64835.1"/>
    <property type="molecule type" value="Genomic_DNA"/>
</dbReference>
<dbReference type="RefSeq" id="WP_011247143.1">
    <property type="nucleotide sequence ID" value="NC_006582.1"/>
</dbReference>
<dbReference type="SMR" id="Q5WFM5"/>
<dbReference type="STRING" id="66692.ABC2300"/>
<dbReference type="GeneID" id="86926464"/>
<dbReference type="KEGG" id="bcl:ABC2300"/>
<dbReference type="eggNOG" id="COG0236">
    <property type="taxonomic scope" value="Bacteria"/>
</dbReference>
<dbReference type="HOGENOM" id="CLU_108696_5_3_9"/>
<dbReference type="OrthoDB" id="9804551at2"/>
<dbReference type="UniPathway" id="UPA00094"/>
<dbReference type="Proteomes" id="UP000001168">
    <property type="component" value="Chromosome"/>
</dbReference>
<dbReference type="GO" id="GO:0005829">
    <property type="term" value="C:cytosol"/>
    <property type="evidence" value="ECO:0007669"/>
    <property type="project" value="TreeGrafter"/>
</dbReference>
<dbReference type="GO" id="GO:0016020">
    <property type="term" value="C:membrane"/>
    <property type="evidence" value="ECO:0007669"/>
    <property type="project" value="GOC"/>
</dbReference>
<dbReference type="GO" id="GO:0000035">
    <property type="term" value="F:acyl binding"/>
    <property type="evidence" value="ECO:0007669"/>
    <property type="project" value="TreeGrafter"/>
</dbReference>
<dbReference type="GO" id="GO:0000036">
    <property type="term" value="F:acyl carrier activity"/>
    <property type="evidence" value="ECO:0007669"/>
    <property type="project" value="UniProtKB-UniRule"/>
</dbReference>
<dbReference type="GO" id="GO:0009245">
    <property type="term" value="P:lipid A biosynthetic process"/>
    <property type="evidence" value="ECO:0007669"/>
    <property type="project" value="TreeGrafter"/>
</dbReference>
<dbReference type="FunFam" id="1.10.1200.10:FF:000001">
    <property type="entry name" value="Acyl carrier protein"/>
    <property type="match status" value="1"/>
</dbReference>
<dbReference type="Gene3D" id="1.10.1200.10">
    <property type="entry name" value="ACP-like"/>
    <property type="match status" value="1"/>
</dbReference>
<dbReference type="HAMAP" id="MF_01217">
    <property type="entry name" value="Acyl_carrier"/>
    <property type="match status" value="1"/>
</dbReference>
<dbReference type="InterPro" id="IPR003231">
    <property type="entry name" value="ACP"/>
</dbReference>
<dbReference type="InterPro" id="IPR036736">
    <property type="entry name" value="ACP-like_sf"/>
</dbReference>
<dbReference type="InterPro" id="IPR009081">
    <property type="entry name" value="PP-bd_ACP"/>
</dbReference>
<dbReference type="NCBIfam" id="TIGR00517">
    <property type="entry name" value="acyl_carrier"/>
    <property type="match status" value="1"/>
</dbReference>
<dbReference type="NCBIfam" id="NF002148">
    <property type="entry name" value="PRK00982.1-2"/>
    <property type="match status" value="1"/>
</dbReference>
<dbReference type="NCBIfam" id="NF002149">
    <property type="entry name" value="PRK00982.1-3"/>
    <property type="match status" value="1"/>
</dbReference>
<dbReference type="NCBIfam" id="NF002150">
    <property type="entry name" value="PRK00982.1-4"/>
    <property type="match status" value="1"/>
</dbReference>
<dbReference type="NCBIfam" id="NF002151">
    <property type="entry name" value="PRK00982.1-5"/>
    <property type="match status" value="1"/>
</dbReference>
<dbReference type="PANTHER" id="PTHR20863">
    <property type="entry name" value="ACYL CARRIER PROTEIN"/>
    <property type="match status" value="1"/>
</dbReference>
<dbReference type="PANTHER" id="PTHR20863:SF76">
    <property type="entry name" value="CARRIER DOMAIN-CONTAINING PROTEIN"/>
    <property type="match status" value="1"/>
</dbReference>
<dbReference type="Pfam" id="PF00550">
    <property type="entry name" value="PP-binding"/>
    <property type="match status" value="1"/>
</dbReference>
<dbReference type="SUPFAM" id="SSF47336">
    <property type="entry name" value="ACP-like"/>
    <property type="match status" value="1"/>
</dbReference>
<dbReference type="PROSITE" id="PS50075">
    <property type="entry name" value="CARRIER"/>
    <property type="match status" value="1"/>
</dbReference>
<comment type="function">
    <text evidence="1">Carrier of the growing fatty acid chain in fatty acid biosynthesis.</text>
</comment>
<comment type="pathway">
    <text evidence="1">Lipid metabolism; fatty acid biosynthesis.</text>
</comment>
<comment type="subcellular location">
    <subcellularLocation>
        <location evidence="1">Cytoplasm</location>
    </subcellularLocation>
</comment>
<comment type="PTM">
    <text evidence="1">4'-phosphopantetheine is transferred from CoA to a specific serine of apo-ACP by AcpS. This modification is essential for activity because fatty acids are bound in thioester linkage to the sulfhydryl of the prosthetic group.</text>
</comment>
<comment type="similarity">
    <text evidence="1">Belongs to the acyl carrier protein (ACP) family.</text>
</comment>
<proteinExistence type="inferred from homology"/>
<accession>Q5WFM5</accession>
<feature type="chain" id="PRO_0000180103" description="Acyl carrier protein">
    <location>
        <begin position="1"/>
        <end position="77"/>
    </location>
</feature>
<feature type="domain" description="Carrier" evidence="2">
    <location>
        <begin position="2"/>
        <end position="77"/>
    </location>
</feature>
<feature type="modified residue" description="O-(pantetheine 4'-phosphoryl)serine" evidence="2">
    <location>
        <position position="37"/>
    </location>
</feature>
<sequence>MADVMERVTKIIVDRLGVEESEVKLESSFKEDLKADSLDVVELVMELEDEFDMEIADEDAEKIATVKDVVDYINNNQ</sequence>
<name>ACP_SHOC1</name>
<organism>
    <name type="scientific">Shouchella clausii (strain KSM-K16)</name>
    <name type="common">Alkalihalobacillus clausii</name>
    <dbReference type="NCBI Taxonomy" id="66692"/>
    <lineage>
        <taxon>Bacteria</taxon>
        <taxon>Bacillati</taxon>
        <taxon>Bacillota</taxon>
        <taxon>Bacilli</taxon>
        <taxon>Bacillales</taxon>
        <taxon>Bacillaceae</taxon>
        <taxon>Shouchella</taxon>
    </lineage>
</organism>
<keyword id="KW-0963">Cytoplasm</keyword>
<keyword id="KW-0275">Fatty acid biosynthesis</keyword>
<keyword id="KW-0276">Fatty acid metabolism</keyword>
<keyword id="KW-0444">Lipid biosynthesis</keyword>
<keyword id="KW-0443">Lipid metabolism</keyword>
<keyword id="KW-0596">Phosphopantetheine</keyword>
<keyword id="KW-0597">Phosphoprotein</keyword>
<keyword id="KW-1185">Reference proteome</keyword>
<reference key="1">
    <citation type="submission" date="2003-10" db="EMBL/GenBank/DDBJ databases">
        <title>The complete genome sequence of the alkaliphilic Bacillus clausii KSM-K16.</title>
        <authorList>
            <person name="Takaki Y."/>
            <person name="Kageyama Y."/>
            <person name="Shimamura S."/>
            <person name="Suzuki H."/>
            <person name="Nishi S."/>
            <person name="Hatada Y."/>
            <person name="Kawai S."/>
            <person name="Ito S."/>
            <person name="Horikoshi K."/>
        </authorList>
    </citation>
    <scope>NUCLEOTIDE SEQUENCE [LARGE SCALE GENOMIC DNA]</scope>
    <source>
        <strain>KSM-K16</strain>
    </source>
</reference>
<protein>
    <recommendedName>
        <fullName evidence="1">Acyl carrier protein</fullName>
        <shortName evidence="1">ACP</shortName>
    </recommendedName>
</protein>